<comment type="similarity">
    <text evidence="1">Belongs to the SfsA family.</text>
</comment>
<accession>B0UV57</accession>
<dbReference type="EMBL" id="CP000947">
    <property type="protein sequence ID" value="ACA32676.1"/>
    <property type="molecule type" value="Genomic_DNA"/>
</dbReference>
<dbReference type="RefSeq" id="WP_012341788.1">
    <property type="nucleotide sequence ID" value="NC_010519.1"/>
</dbReference>
<dbReference type="SMR" id="B0UV57"/>
<dbReference type="STRING" id="228400.HSM_0099"/>
<dbReference type="GeneID" id="31486375"/>
<dbReference type="KEGG" id="hsm:HSM_0099"/>
<dbReference type="HOGENOM" id="CLU_052299_2_0_6"/>
<dbReference type="GO" id="GO:0003677">
    <property type="term" value="F:DNA binding"/>
    <property type="evidence" value="ECO:0007669"/>
    <property type="project" value="InterPro"/>
</dbReference>
<dbReference type="CDD" id="cd22359">
    <property type="entry name" value="SfsA-like_bacterial"/>
    <property type="match status" value="1"/>
</dbReference>
<dbReference type="FunFam" id="2.40.50.580:FF:000001">
    <property type="entry name" value="Sugar fermentation stimulation protein A"/>
    <property type="match status" value="1"/>
</dbReference>
<dbReference type="FunFam" id="3.40.1350.60:FF:000001">
    <property type="entry name" value="Sugar fermentation stimulation protein A"/>
    <property type="match status" value="1"/>
</dbReference>
<dbReference type="Gene3D" id="2.40.50.580">
    <property type="match status" value="1"/>
</dbReference>
<dbReference type="Gene3D" id="3.40.1350.60">
    <property type="match status" value="1"/>
</dbReference>
<dbReference type="HAMAP" id="MF_00095">
    <property type="entry name" value="SfsA"/>
    <property type="match status" value="1"/>
</dbReference>
<dbReference type="InterPro" id="IPR005224">
    <property type="entry name" value="SfsA"/>
</dbReference>
<dbReference type="InterPro" id="IPR040452">
    <property type="entry name" value="SfsA_C"/>
</dbReference>
<dbReference type="InterPro" id="IPR041465">
    <property type="entry name" value="SfsA_N"/>
</dbReference>
<dbReference type="NCBIfam" id="TIGR00230">
    <property type="entry name" value="sfsA"/>
    <property type="match status" value="1"/>
</dbReference>
<dbReference type="PANTHER" id="PTHR30545">
    <property type="entry name" value="SUGAR FERMENTATION STIMULATION PROTEIN A"/>
    <property type="match status" value="1"/>
</dbReference>
<dbReference type="PANTHER" id="PTHR30545:SF2">
    <property type="entry name" value="SUGAR FERMENTATION STIMULATION PROTEIN A"/>
    <property type="match status" value="1"/>
</dbReference>
<dbReference type="Pfam" id="PF03749">
    <property type="entry name" value="SfsA"/>
    <property type="match status" value="1"/>
</dbReference>
<dbReference type="Pfam" id="PF17746">
    <property type="entry name" value="SfsA_N"/>
    <property type="match status" value="1"/>
</dbReference>
<sequence length="238" mass="27047">MQLPNLQSATLLRRYKRFLADVELNNGEILTLHCANTGAMTGCGEKGDTVWFSTSDSKTRKYPHSWELTQLKNGQTVCINTHRSNQLTLEALQNKIITELAEYDEILPEVKYGVENSRIDFLLKGKNLPDCYVEVKSVTFVKNHLGLFPDAVTTRGQKHLRELIAMKKRGHRAVVFFAGLHDGFNRFTVAKSIDPDYAELLQQAVKEGVEVYSYAVKFDFSHQKPTALYLTNLVSYLE</sequence>
<feature type="chain" id="PRO_1000075542" description="Sugar fermentation stimulation protein homolog">
    <location>
        <begin position="1"/>
        <end position="238"/>
    </location>
</feature>
<proteinExistence type="inferred from homology"/>
<protein>
    <recommendedName>
        <fullName evidence="1">Sugar fermentation stimulation protein homolog</fullName>
    </recommendedName>
</protein>
<organism>
    <name type="scientific">Histophilus somni (strain 2336)</name>
    <name type="common">Haemophilus somnus</name>
    <dbReference type="NCBI Taxonomy" id="228400"/>
    <lineage>
        <taxon>Bacteria</taxon>
        <taxon>Pseudomonadati</taxon>
        <taxon>Pseudomonadota</taxon>
        <taxon>Gammaproteobacteria</taxon>
        <taxon>Pasteurellales</taxon>
        <taxon>Pasteurellaceae</taxon>
        <taxon>Histophilus</taxon>
    </lineage>
</organism>
<name>SFSA_HISS2</name>
<gene>
    <name evidence="1" type="primary">sfsA</name>
    <name type="ordered locus">HSM_0099</name>
</gene>
<reference key="1">
    <citation type="submission" date="2008-02" db="EMBL/GenBank/DDBJ databases">
        <title>Complete sequence of Haemophilus somnus 2336.</title>
        <authorList>
            <consortium name="US DOE Joint Genome Institute"/>
            <person name="Siddaramappa S."/>
            <person name="Duncan A.J."/>
            <person name="Challacombe J.F."/>
            <person name="Rainey D."/>
            <person name="Gillaspy A.F."/>
            <person name="Carson M."/>
            <person name="Gipson J."/>
            <person name="Gipson M."/>
            <person name="Bruce D."/>
            <person name="Detter J.C."/>
            <person name="Han C.S."/>
            <person name="Land M."/>
            <person name="Tapia R."/>
            <person name="Thompson L.S."/>
            <person name="Orvis J."/>
            <person name="Zaitshik J."/>
            <person name="Barnes G."/>
            <person name="Brettin T.S."/>
            <person name="Dyer D.W."/>
            <person name="Inzana T.J."/>
        </authorList>
    </citation>
    <scope>NUCLEOTIDE SEQUENCE [LARGE SCALE GENOMIC DNA]</scope>
    <source>
        <strain>2336</strain>
    </source>
</reference>
<evidence type="ECO:0000255" key="1">
    <source>
        <dbReference type="HAMAP-Rule" id="MF_00095"/>
    </source>
</evidence>